<name>DAPB_DINSH</name>
<feature type="chain" id="PRO_1000075677" description="4-hydroxy-tetrahydrodipicolinate reductase">
    <location>
        <begin position="1"/>
        <end position="269"/>
    </location>
</feature>
<feature type="active site" description="Proton donor/acceptor" evidence="1">
    <location>
        <position position="158"/>
    </location>
</feature>
<feature type="active site" description="Proton donor" evidence="1">
    <location>
        <position position="162"/>
    </location>
</feature>
<feature type="binding site" evidence="1">
    <location>
        <begin position="11"/>
        <end position="16"/>
    </location>
    <ligand>
        <name>NAD(+)</name>
        <dbReference type="ChEBI" id="CHEBI:57540"/>
    </ligand>
</feature>
<feature type="binding site" evidence="1">
    <location>
        <position position="37"/>
    </location>
    <ligand>
        <name>NAD(+)</name>
        <dbReference type="ChEBI" id="CHEBI:57540"/>
    </ligand>
</feature>
<feature type="binding site" evidence="1">
    <location>
        <position position="38"/>
    </location>
    <ligand>
        <name>NADP(+)</name>
        <dbReference type="ChEBI" id="CHEBI:58349"/>
    </ligand>
</feature>
<feature type="binding site" evidence="1">
    <location>
        <begin position="101"/>
        <end position="103"/>
    </location>
    <ligand>
        <name>NAD(+)</name>
        <dbReference type="ChEBI" id="CHEBI:57540"/>
    </ligand>
</feature>
<feature type="binding site" evidence="1">
    <location>
        <begin position="125"/>
        <end position="128"/>
    </location>
    <ligand>
        <name>NAD(+)</name>
        <dbReference type="ChEBI" id="CHEBI:57540"/>
    </ligand>
</feature>
<feature type="binding site" evidence="1">
    <location>
        <position position="159"/>
    </location>
    <ligand>
        <name>(S)-2,3,4,5-tetrahydrodipicolinate</name>
        <dbReference type="ChEBI" id="CHEBI:16845"/>
    </ligand>
</feature>
<feature type="binding site" evidence="1">
    <location>
        <begin position="168"/>
        <end position="169"/>
    </location>
    <ligand>
        <name>(S)-2,3,4,5-tetrahydrodipicolinate</name>
        <dbReference type="ChEBI" id="CHEBI:16845"/>
    </ligand>
</feature>
<comment type="function">
    <text evidence="1">Catalyzes the conversion of 4-hydroxy-tetrahydrodipicolinate (HTPA) to tetrahydrodipicolinate.</text>
</comment>
<comment type="catalytic activity">
    <reaction evidence="1">
        <text>(S)-2,3,4,5-tetrahydrodipicolinate + NAD(+) + H2O = (2S,4S)-4-hydroxy-2,3,4,5-tetrahydrodipicolinate + NADH + H(+)</text>
        <dbReference type="Rhea" id="RHEA:35323"/>
        <dbReference type="ChEBI" id="CHEBI:15377"/>
        <dbReference type="ChEBI" id="CHEBI:15378"/>
        <dbReference type="ChEBI" id="CHEBI:16845"/>
        <dbReference type="ChEBI" id="CHEBI:57540"/>
        <dbReference type="ChEBI" id="CHEBI:57945"/>
        <dbReference type="ChEBI" id="CHEBI:67139"/>
        <dbReference type="EC" id="1.17.1.8"/>
    </reaction>
</comment>
<comment type="catalytic activity">
    <reaction evidence="1">
        <text>(S)-2,3,4,5-tetrahydrodipicolinate + NADP(+) + H2O = (2S,4S)-4-hydroxy-2,3,4,5-tetrahydrodipicolinate + NADPH + H(+)</text>
        <dbReference type="Rhea" id="RHEA:35331"/>
        <dbReference type="ChEBI" id="CHEBI:15377"/>
        <dbReference type="ChEBI" id="CHEBI:15378"/>
        <dbReference type="ChEBI" id="CHEBI:16845"/>
        <dbReference type="ChEBI" id="CHEBI:57783"/>
        <dbReference type="ChEBI" id="CHEBI:58349"/>
        <dbReference type="ChEBI" id="CHEBI:67139"/>
        <dbReference type="EC" id="1.17.1.8"/>
    </reaction>
</comment>
<comment type="pathway">
    <text evidence="1">Amino-acid biosynthesis; L-lysine biosynthesis via DAP pathway; (S)-tetrahydrodipicolinate from L-aspartate: step 4/4.</text>
</comment>
<comment type="subcellular location">
    <subcellularLocation>
        <location evidence="1">Cytoplasm</location>
    </subcellularLocation>
</comment>
<comment type="similarity">
    <text evidence="1">Belongs to the DapB family.</text>
</comment>
<comment type="caution">
    <text evidence="2">Was originally thought to be a dihydrodipicolinate reductase (DHDPR), catalyzing the conversion of dihydrodipicolinate to tetrahydrodipicolinate. However, it was shown in E.coli that the substrate of the enzymatic reaction is not dihydrodipicolinate (DHDP) but in fact (2S,4S)-4-hydroxy-2,3,4,5-tetrahydrodipicolinic acid (HTPA), the product released by the DapA-catalyzed reaction.</text>
</comment>
<keyword id="KW-0028">Amino-acid biosynthesis</keyword>
<keyword id="KW-0963">Cytoplasm</keyword>
<keyword id="KW-0220">Diaminopimelate biosynthesis</keyword>
<keyword id="KW-0457">Lysine biosynthesis</keyword>
<keyword id="KW-0520">NAD</keyword>
<keyword id="KW-0521">NADP</keyword>
<keyword id="KW-0560">Oxidoreductase</keyword>
<keyword id="KW-1185">Reference proteome</keyword>
<accession>A8LL24</accession>
<protein>
    <recommendedName>
        <fullName evidence="1">4-hydroxy-tetrahydrodipicolinate reductase</fullName>
        <shortName evidence="1">HTPA reductase</shortName>
        <ecNumber evidence="1">1.17.1.8</ecNumber>
    </recommendedName>
</protein>
<proteinExistence type="inferred from homology"/>
<sequence length="269" mass="27620">MSDVPGIVVTGGSGRMGRMLIETVRGSDAARLVGVTERPGHDWIGADIGVALGGAAIGVTVTDDPLEAFATAQAVIDFTSPAATVAHAELTAQARAVHVIGTTGFSPADLAHLEAAARHAVIVRAGNMSLGVNLLVKLTEKVAAALDADYDIEVIEAHHRHKVDAPSGTALMLGEAAAAGRGVALADVSDRGRDGITGERKRGDIGFSAIRGGDIVGEHDVLFAAEGERITLRHVASDRSVFARGALKAALWGQDKGPGAYDMMDVLGL</sequence>
<reference key="1">
    <citation type="journal article" date="2010" name="ISME J.">
        <title>The complete genome sequence of the algal symbiont Dinoroseobacter shibae: a hitchhiker's guide to life in the sea.</title>
        <authorList>
            <person name="Wagner-Dobler I."/>
            <person name="Ballhausen B."/>
            <person name="Berger M."/>
            <person name="Brinkhoff T."/>
            <person name="Buchholz I."/>
            <person name="Bunk B."/>
            <person name="Cypionka H."/>
            <person name="Daniel R."/>
            <person name="Drepper T."/>
            <person name="Gerdts G."/>
            <person name="Hahnke S."/>
            <person name="Han C."/>
            <person name="Jahn D."/>
            <person name="Kalhoefer D."/>
            <person name="Kiss H."/>
            <person name="Klenk H.P."/>
            <person name="Kyrpides N."/>
            <person name="Liebl W."/>
            <person name="Liesegang H."/>
            <person name="Meincke L."/>
            <person name="Pati A."/>
            <person name="Petersen J."/>
            <person name="Piekarski T."/>
            <person name="Pommerenke C."/>
            <person name="Pradella S."/>
            <person name="Pukall R."/>
            <person name="Rabus R."/>
            <person name="Stackebrandt E."/>
            <person name="Thole S."/>
            <person name="Thompson L."/>
            <person name="Tielen P."/>
            <person name="Tomasch J."/>
            <person name="von Jan M."/>
            <person name="Wanphrut N."/>
            <person name="Wichels A."/>
            <person name="Zech H."/>
            <person name="Simon M."/>
        </authorList>
    </citation>
    <scope>NUCLEOTIDE SEQUENCE [LARGE SCALE GENOMIC DNA]</scope>
    <source>
        <strain>DSM 16493 / NCIMB 14021 / DFL 12</strain>
    </source>
</reference>
<dbReference type="EC" id="1.17.1.8" evidence="1"/>
<dbReference type="EMBL" id="CP000830">
    <property type="protein sequence ID" value="ABV94773.1"/>
    <property type="molecule type" value="Genomic_DNA"/>
</dbReference>
<dbReference type="RefSeq" id="WP_012179701.1">
    <property type="nucleotide sequence ID" value="NC_009952.1"/>
</dbReference>
<dbReference type="SMR" id="A8LL24"/>
<dbReference type="STRING" id="398580.Dshi_3040"/>
<dbReference type="KEGG" id="dsh:Dshi_3040"/>
<dbReference type="eggNOG" id="COG0289">
    <property type="taxonomic scope" value="Bacteria"/>
</dbReference>
<dbReference type="HOGENOM" id="CLU_047479_2_1_5"/>
<dbReference type="OrthoDB" id="9790352at2"/>
<dbReference type="UniPathway" id="UPA00034">
    <property type="reaction ID" value="UER00018"/>
</dbReference>
<dbReference type="Proteomes" id="UP000006833">
    <property type="component" value="Chromosome"/>
</dbReference>
<dbReference type="GO" id="GO:0005829">
    <property type="term" value="C:cytosol"/>
    <property type="evidence" value="ECO:0007669"/>
    <property type="project" value="TreeGrafter"/>
</dbReference>
<dbReference type="GO" id="GO:0008839">
    <property type="term" value="F:4-hydroxy-tetrahydrodipicolinate reductase"/>
    <property type="evidence" value="ECO:0007669"/>
    <property type="project" value="UniProtKB-EC"/>
</dbReference>
<dbReference type="GO" id="GO:0051287">
    <property type="term" value="F:NAD binding"/>
    <property type="evidence" value="ECO:0007669"/>
    <property type="project" value="UniProtKB-UniRule"/>
</dbReference>
<dbReference type="GO" id="GO:0050661">
    <property type="term" value="F:NADP binding"/>
    <property type="evidence" value="ECO:0007669"/>
    <property type="project" value="UniProtKB-UniRule"/>
</dbReference>
<dbReference type="GO" id="GO:0016726">
    <property type="term" value="F:oxidoreductase activity, acting on CH or CH2 groups, NAD or NADP as acceptor"/>
    <property type="evidence" value="ECO:0007669"/>
    <property type="project" value="UniProtKB-UniRule"/>
</dbReference>
<dbReference type="GO" id="GO:0019877">
    <property type="term" value="P:diaminopimelate biosynthetic process"/>
    <property type="evidence" value="ECO:0007669"/>
    <property type="project" value="UniProtKB-UniRule"/>
</dbReference>
<dbReference type="GO" id="GO:0009089">
    <property type="term" value="P:lysine biosynthetic process via diaminopimelate"/>
    <property type="evidence" value="ECO:0007669"/>
    <property type="project" value="UniProtKB-UniRule"/>
</dbReference>
<dbReference type="CDD" id="cd02274">
    <property type="entry name" value="DHDPR_N"/>
    <property type="match status" value="1"/>
</dbReference>
<dbReference type="FunFam" id="3.30.360.10:FF:000004">
    <property type="entry name" value="4-hydroxy-tetrahydrodipicolinate reductase"/>
    <property type="match status" value="1"/>
</dbReference>
<dbReference type="Gene3D" id="3.30.360.10">
    <property type="entry name" value="Dihydrodipicolinate Reductase, domain 2"/>
    <property type="match status" value="1"/>
</dbReference>
<dbReference type="Gene3D" id="3.40.50.720">
    <property type="entry name" value="NAD(P)-binding Rossmann-like Domain"/>
    <property type="match status" value="1"/>
</dbReference>
<dbReference type="HAMAP" id="MF_00102">
    <property type="entry name" value="DapB"/>
    <property type="match status" value="1"/>
</dbReference>
<dbReference type="InterPro" id="IPR022663">
    <property type="entry name" value="DapB_C"/>
</dbReference>
<dbReference type="InterPro" id="IPR000846">
    <property type="entry name" value="DapB_N"/>
</dbReference>
<dbReference type="InterPro" id="IPR022664">
    <property type="entry name" value="DapB_N_CS"/>
</dbReference>
<dbReference type="InterPro" id="IPR023940">
    <property type="entry name" value="DHDPR_bac"/>
</dbReference>
<dbReference type="InterPro" id="IPR036291">
    <property type="entry name" value="NAD(P)-bd_dom_sf"/>
</dbReference>
<dbReference type="NCBIfam" id="TIGR00036">
    <property type="entry name" value="dapB"/>
    <property type="match status" value="1"/>
</dbReference>
<dbReference type="PANTHER" id="PTHR20836:SF0">
    <property type="entry name" value="4-HYDROXY-TETRAHYDRODIPICOLINATE REDUCTASE 1, CHLOROPLASTIC-RELATED"/>
    <property type="match status" value="1"/>
</dbReference>
<dbReference type="PANTHER" id="PTHR20836">
    <property type="entry name" value="DIHYDRODIPICOLINATE REDUCTASE"/>
    <property type="match status" value="1"/>
</dbReference>
<dbReference type="Pfam" id="PF05173">
    <property type="entry name" value="DapB_C"/>
    <property type="match status" value="1"/>
</dbReference>
<dbReference type="Pfam" id="PF01113">
    <property type="entry name" value="DapB_N"/>
    <property type="match status" value="1"/>
</dbReference>
<dbReference type="PIRSF" id="PIRSF000161">
    <property type="entry name" value="DHPR"/>
    <property type="match status" value="1"/>
</dbReference>
<dbReference type="SUPFAM" id="SSF55347">
    <property type="entry name" value="Glyceraldehyde-3-phosphate dehydrogenase-like, C-terminal domain"/>
    <property type="match status" value="1"/>
</dbReference>
<dbReference type="SUPFAM" id="SSF51735">
    <property type="entry name" value="NAD(P)-binding Rossmann-fold domains"/>
    <property type="match status" value="1"/>
</dbReference>
<dbReference type="PROSITE" id="PS01298">
    <property type="entry name" value="DAPB"/>
    <property type="match status" value="1"/>
</dbReference>
<evidence type="ECO:0000255" key="1">
    <source>
        <dbReference type="HAMAP-Rule" id="MF_00102"/>
    </source>
</evidence>
<evidence type="ECO:0000305" key="2"/>
<organism>
    <name type="scientific">Dinoroseobacter shibae (strain DSM 16493 / NCIMB 14021 / DFL 12)</name>
    <dbReference type="NCBI Taxonomy" id="398580"/>
    <lineage>
        <taxon>Bacteria</taxon>
        <taxon>Pseudomonadati</taxon>
        <taxon>Pseudomonadota</taxon>
        <taxon>Alphaproteobacteria</taxon>
        <taxon>Rhodobacterales</taxon>
        <taxon>Roseobacteraceae</taxon>
        <taxon>Dinoroseobacter</taxon>
    </lineage>
</organism>
<gene>
    <name evidence="1" type="primary">dapB</name>
    <name type="ordered locus">Dshi_3040</name>
</gene>